<keyword id="KW-0963">Cytoplasm</keyword>
<keyword id="KW-0968">Cytoplasmic vesicle</keyword>
<keyword id="KW-0206">Cytoskeleton</keyword>
<keyword id="KW-0539">Nucleus</keyword>
<keyword id="KW-1185">Reference proteome</keyword>
<keyword id="KW-0804">Transcription</keyword>
<keyword id="KW-0805">Transcription regulation</keyword>
<evidence type="ECO:0000250" key="1">
    <source>
        <dbReference type="UniProtKB" id="Q8TDG2"/>
    </source>
</evidence>
<evidence type="ECO:0000305" key="2"/>
<feature type="chain" id="PRO_0000255657" description="Actin-related protein T1">
    <location>
        <begin position="1"/>
        <end position="375"/>
    </location>
</feature>
<protein>
    <recommendedName>
        <fullName>Actin-related protein T1</fullName>
    </recommendedName>
</protein>
<gene>
    <name type="primary">ACTRT1</name>
    <name type="ORF">QtsA-13725</name>
</gene>
<comment type="function">
    <text evidence="1">Negatively regulates the Hedgehog (SHH) signaling. Binds to the promoter of the SHH signaling mediator, GLI1, and inhibits its expression.</text>
</comment>
<comment type="subcellular location">
    <subcellularLocation>
        <location evidence="1">Cytoplasm</location>
        <location evidence="1">Cytoskeleton</location>
    </subcellularLocation>
    <subcellularLocation>
        <location evidence="1">Cytoplasm</location>
    </subcellularLocation>
    <subcellularLocation>
        <location evidence="1">Nucleus</location>
    </subcellularLocation>
    <subcellularLocation>
        <location evidence="1">Cytoplasmic vesicle</location>
        <location evidence="1">Secretory vesicle</location>
        <location evidence="1">Acrosome</location>
    </subcellularLocation>
    <text evidence="1">Both detected in the nucleus and cytoplasm, localizes to the nucleus where it binds chromatin upon stimulation of the Hedgehog pathway.</text>
</comment>
<comment type="similarity">
    <text evidence="2">Belongs to the actin family.</text>
</comment>
<organism>
    <name type="scientific">Macaca fascicularis</name>
    <name type="common">Crab-eating macaque</name>
    <name type="synonym">Cynomolgus monkey</name>
    <dbReference type="NCBI Taxonomy" id="9541"/>
    <lineage>
        <taxon>Eukaryota</taxon>
        <taxon>Metazoa</taxon>
        <taxon>Chordata</taxon>
        <taxon>Craniata</taxon>
        <taxon>Vertebrata</taxon>
        <taxon>Euteleostomi</taxon>
        <taxon>Mammalia</taxon>
        <taxon>Eutheria</taxon>
        <taxon>Euarchontoglires</taxon>
        <taxon>Primates</taxon>
        <taxon>Haplorrhini</taxon>
        <taxon>Catarrhini</taxon>
        <taxon>Cercopithecidae</taxon>
        <taxon>Cercopithecinae</taxon>
        <taxon>Macaca</taxon>
    </lineage>
</organism>
<reference key="1">
    <citation type="submission" date="2005-06" db="EMBL/GenBank/DDBJ databases">
        <title>DNA sequences of macaque genes expressed in brain or testis and its evolutionary implications.</title>
        <authorList>
            <consortium name="International consortium for macaque cDNA sequencing and analysis"/>
        </authorList>
    </citation>
    <scope>NUCLEOTIDE SEQUENCE [LARGE SCALE MRNA]</scope>
    <source>
        <tissue>Testis</tissue>
    </source>
</reference>
<name>ACTT1_MACFA</name>
<accession>Q4R821</accession>
<proteinExistence type="evidence at transcript level"/>
<sequence length="375" mass="41699">MFNPHVLDVPAVIFDNGSGLCKAGVSGEIGPRHVINSVLGHRKFNMPSARLNQYFVGQEALYKFDALHLHYPIKRGLVTGWDDMEKLWKHLFEWELGVKPSQQPVLMTEPSLNPREIREKLAEMMFENFSVPGFYLSNHAVAALYASACVTGLVVDSGDGVTCAVPIFEGYSLPHAVTKLYTAGRDITEHLTQLLFANGFNFPCILNKAVANNIKEKLCYIALEPEKELRKSRGEVLGAYRLPDGHVIHFGDELYQVPEVLFAPDQLGIHSPGLSKMVSSSIMKCDTDIQNKLYAEIVLSGGTTLFPGLEERLMKEVEQLASKGTPIKITASPDRCFSAWIGASIMTSMSSFKQMWVTSADFKEYGTSVVQRRCF</sequence>
<dbReference type="EMBL" id="AB168640">
    <property type="protein sequence ID" value="BAE00751.1"/>
    <property type="molecule type" value="mRNA"/>
</dbReference>
<dbReference type="RefSeq" id="NP_001272021.1">
    <property type="nucleotide sequence ID" value="NM_001285092.1"/>
</dbReference>
<dbReference type="SMR" id="Q4R821"/>
<dbReference type="STRING" id="9541.ENSMFAP00000011281"/>
<dbReference type="eggNOG" id="KOG0676">
    <property type="taxonomic scope" value="Eukaryota"/>
</dbReference>
<dbReference type="Proteomes" id="UP000233100">
    <property type="component" value="Unplaced"/>
</dbReference>
<dbReference type="GO" id="GO:0001669">
    <property type="term" value="C:acrosomal vesicle"/>
    <property type="evidence" value="ECO:0000250"/>
    <property type="project" value="UniProtKB"/>
</dbReference>
<dbReference type="GO" id="GO:0005737">
    <property type="term" value="C:cytoplasm"/>
    <property type="evidence" value="ECO:0000250"/>
    <property type="project" value="UniProtKB"/>
</dbReference>
<dbReference type="GO" id="GO:0005856">
    <property type="term" value="C:cytoskeleton"/>
    <property type="evidence" value="ECO:0007669"/>
    <property type="project" value="UniProtKB-SubCell"/>
</dbReference>
<dbReference type="GO" id="GO:0005634">
    <property type="term" value="C:nucleus"/>
    <property type="evidence" value="ECO:0000250"/>
    <property type="project" value="UniProtKB"/>
</dbReference>
<dbReference type="GO" id="GO:0003682">
    <property type="term" value="F:chromatin binding"/>
    <property type="evidence" value="ECO:0000250"/>
    <property type="project" value="UniProtKB"/>
</dbReference>
<dbReference type="GO" id="GO:0045892">
    <property type="term" value="P:negative regulation of DNA-templated transcription"/>
    <property type="evidence" value="ECO:0000250"/>
    <property type="project" value="UniProtKB"/>
</dbReference>
<dbReference type="GO" id="GO:0008589">
    <property type="term" value="P:regulation of smoothened signaling pathway"/>
    <property type="evidence" value="ECO:0000250"/>
    <property type="project" value="UniProtKB"/>
</dbReference>
<dbReference type="CDD" id="cd13397">
    <property type="entry name" value="ASKHA_NBD_actin_Arp-T1-3"/>
    <property type="match status" value="1"/>
</dbReference>
<dbReference type="FunFam" id="3.90.640.10:FF:000007">
    <property type="entry name" value="Actin like 7B"/>
    <property type="match status" value="1"/>
</dbReference>
<dbReference type="FunFam" id="3.30.420.40:FF:000050">
    <property type="entry name" value="Actin, alpha skeletal muscle"/>
    <property type="match status" value="1"/>
</dbReference>
<dbReference type="Gene3D" id="3.30.420.40">
    <property type="match status" value="2"/>
</dbReference>
<dbReference type="Gene3D" id="3.90.640.10">
    <property type="entry name" value="Actin, Chain A, domain 4"/>
    <property type="match status" value="1"/>
</dbReference>
<dbReference type="InterPro" id="IPR004000">
    <property type="entry name" value="Actin"/>
</dbReference>
<dbReference type="InterPro" id="IPR043129">
    <property type="entry name" value="ATPase_NBD"/>
</dbReference>
<dbReference type="PANTHER" id="PTHR11937">
    <property type="entry name" value="ACTIN"/>
    <property type="match status" value="1"/>
</dbReference>
<dbReference type="Pfam" id="PF00022">
    <property type="entry name" value="Actin"/>
    <property type="match status" value="1"/>
</dbReference>
<dbReference type="PRINTS" id="PR00190">
    <property type="entry name" value="ACTIN"/>
</dbReference>
<dbReference type="SMART" id="SM00268">
    <property type="entry name" value="ACTIN"/>
    <property type="match status" value="1"/>
</dbReference>
<dbReference type="SUPFAM" id="SSF53067">
    <property type="entry name" value="Actin-like ATPase domain"/>
    <property type="match status" value="2"/>
</dbReference>